<sequence>MEEETKVVKKVTGPAKPQKLRSIDVELAQKLNTGSSQTKSSALYKLRSVVKNEKLTEIQLLKIWKGLFLSLYNTDKPIVQEEFSRDISKLTTYFKDYKDSLMFIKCFFIILQKHWDYIDKYRVDKFYSLVRKMLNSSFQILKKRNAQHEEGSEEEEARLALNEQIYSGLVKIFKSTVLNTSSDSTTNTNGVLLHFADIYLEELFKVTQGHMEPINLTKILLPFVNFLTKSEDDVSCKRIKERVFDRLLTTYSPFDKKDAYYLPKVGVSSSTPEIFPTDYEMFSKLFFKCASSKDTLEQNRKTLYGLKNQFKRAQAALEELEELADNIVLDENGDIVENPNVNPEDLQGDDSDDSDEEFDVDQMDSEDSGEGEFDDEIDADDAEELDDDDDEEFDEELDEEDEEEEEEEEEEVPPPPPTKNLKSKPSPVTQKNKQQQQQPPAKPAPITKKQQQSPAKPTQVTKKQQSPAKPTPVTKKQQSPVKPTSPKVVKKPTRK</sequence>
<keyword id="KW-0539">Nucleus</keyword>
<keyword id="KW-1185">Reference proteome</keyword>
<keyword id="KW-0698">rRNA processing</keyword>
<accession>Q54WY5</accession>
<protein>
    <recommendedName>
        <fullName>Ribosomal RNA processing protein 1 homolog</fullName>
    </recommendedName>
    <alternativeName>
        <fullName>RRP1-like protein</fullName>
    </alternativeName>
</protein>
<evidence type="ECO:0000250" key="1"/>
<evidence type="ECO:0000256" key="2">
    <source>
        <dbReference type="SAM" id="MobiDB-lite"/>
    </source>
</evidence>
<evidence type="ECO:0000305" key="3"/>
<reference key="1">
    <citation type="journal article" date="2005" name="Nature">
        <title>The genome of the social amoeba Dictyostelium discoideum.</title>
        <authorList>
            <person name="Eichinger L."/>
            <person name="Pachebat J.A."/>
            <person name="Gloeckner G."/>
            <person name="Rajandream M.A."/>
            <person name="Sucgang R."/>
            <person name="Berriman M."/>
            <person name="Song J."/>
            <person name="Olsen R."/>
            <person name="Szafranski K."/>
            <person name="Xu Q."/>
            <person name="Tunggal B."/>
            <person name="Kummerfeld S."/>
            <person name="Madera M."/>
            <person name="Konfortov B.A."/>
            <person name="Rivero F."/>
            <person name="Bankier A.T."/>
            <person name="Lehmann R."/>
            <person name="Hamlin N."/>
            <person name="Davies R."/>
            <person name="Gaudet P."/>
            <person name="Fey P."/>
            <person name="Pilcher K."/>
            <person name="Chen G."/>
            <person name="Saunders D."/>
            <person name="Sodergren E.J."/>
            <person name="Davis P."/>
            <person name="Kerhornou A."/>
            <person name="Nie X."/>
            <person name="Hall N."/>
            <person name="Anjard C."/>
            <person name="Hemphill L."/>
            <person name="Bason N."/>
            <person name="Farbrother P."/>
            <person name="Desany B."/>
            <person name="Just E."/>
            <person name="Morio T."/>
            <person name="Rost R."/>
            <person name="Churcher C.M."/>
            <person name="Cooper J."/>
            <person name="Haydock S."/>
            <person name="van Driessche N."/>
            <person name="Cronin A."/>
            <person name="Goodhead I."/>
            <person name="Muzny D.M."/>
            <person name="Mourier T."/>
            <person name="Pain A."/>
            <person name="Lu M."/>
            <person name="Harper D."/>
            <person name="Lindsay R."/>
            <person name="Hauser H."/>
            <person name="James K.D."/>
            <person name="Quiles M."/>
            <person name="Madan Babu M."/>
            <person name="Saito T."/>
            <person name="Buchrieser C."/>
            <person name="Wardroper A."/>
            <person name="Felder M."/>
            <person name="Thangavelu M."/>
            <person name="Johnson D."/>
            <person name="Knights A."/>
            <person name="Loulseged H."/>
            <person name="Mungall K.L."/>
            <person name="Oliver K."/>
            <person name="Price C."/>
            <person name="Quail M.A."/>
            <person name="Urushihara H."/>
            <person name="Hernandez J."/>
            <person name="Rabbinowitsch E."/>
            <person name="Steffen D."/>
            <person name="Sanders M."/>
            <person name="Ma J."/>
            <person name="Kohara Y."/>
            <person name="Sharp S."/>
            <person name="Simmonds M.N."/>
            <person name="Spiegler S."/>
            <person name="Tivey A."/>
            <person name="Sugano S."/>
            <person name="White B."/>
            <person name="Walker D."/>
            <person name="Woodward J.R."/>
            <person name="Winckler T."/>
            <person name="Tanaka Y."/>
            <person name="Shaulsky G."/>
            <person name="Schleicher M."/>
            <person name="Weinstock G.M."/>
            <person name="Rosenthal A."/>
            <person name="Cox E.C."/>
            <person name="Chisholm R.L."/>
            <person name="Gibbs R.A."/>
            <person name="Loomis W.F."/>
            <person name="Platzer M."/>
            <person name="Kay R.R."/>
            <person name="Williams J.G."/>
            <person name="Dear P.H."/>
            <person name="Noegel A.A."/>
            <person name="Barrell B.G."/>
            <person name="Kuspa A."/>
        </authorList>
    </citation>
    <scope>NUCLEOTIDE SEQUENCE [LARGE SCALE GENOMIC DNA]</scope>
    <source>
        <strain>AX4</strain>
    </source>
</reference>
<proteinExistence type="inferred from homology"/>
<dbReference type="EMBL" id="AAFI02000030">
    <property type="protein sequence ID" value="EAL67809.1"/>
    <property type="molecule type" value="Genomic_DNA"/>
</dbReference>
<dbReference type="RefSeq" id="XP_641792.1">
    <property type="nucleotide sequence ID" value="XM_636700.1"/>
</dbReference>
<dbReference type="SMR" id="Q54WY5"/>
<dbReference type="FunCoup" id="Q54WY5">
    <property type="interactions" value="214"/>
</dbReference>
<dbReference type="STRING" id="44689.Q54WY5"/>
<dbReference type="GlyGen" id="Q54WY5">
    <property type="glycosylation" value="1 site"/>
</dbReference>
<dbReference type="PaxDb" id="44689-DDB0205719"/>
<dbReference type="EnsemblProtists" id="EAL67809">
    <property type="protein sequence ID" value="EAL67809"/>
    <property type="gene ID" value="DDB_G0279321"/>
</dbReference>
<dbReference type="GeneID" id="8621989"/>
<dbReference type="KEGG" id="ddi:DDB_G0279321"/>
<dbReference type="dictyBase" id="DDB_G0279321"/>
<dbReference type="VEuPathDB" id="AmoebaDB:DDB_G0279321"/>
<dbReference type="eggNOG" id="KOG3911">
    <property type="taxonomic scope" value="Eukaryota"/>
</dbReference>
<dbReference type="HOGENOM" id="CLU_551447_0_0_1"/>
<dbReference type="InParanoid" id="Q54WY5"/>
<dbReference type="OMA" id="REWVHID"/>
<dbReference type="PhylomeDB" id="Q54WY5"/>
<dbReference type="PRO" id="PR:Q54WY5"/>
<dbReference type="Proteomes" id="UP000002195">
    <property type="component" value="Chromosome 3"/>
</dbReference>
<dbReference type="GO" id="GO:0005634">
    <property type="term" value="C:nucleus"/>
    <property type="evidence" value="ECO:0000318"/>
    <property type="project" value="GO_Central"/>
</dbReference>
<dbReference type="GO" id="GO:0030688">
    <property type="term" value="C:preribosome, small subunit precursor"/>
    <property type="evidence" value="ECO:0007669"/>
    <property type="project" value="InterPro"/>
</dbReference>
<dbReference type="GO" id="GO:0006364">
    <property type="term" value="P:rRNA processing"/>
    <property type="evidence" value="ECO:0007669"/>
    <property type="project" value="UniProtKB-KW"/>
</dbReference>
<dbReference type="InterPro" id="IPR010301">
    <property type="entry name" value="RRP1"/>
</dbReference>
<dbReference type="PANTHER" id="PTHR13026">
    <property type="entry name" value="NNP-1 PROTEIN NOVEL NUCLEAR PROTEIN 1 NOP52"/>
    <property type="match status" value="1"/>
</dbReference>
<dbReference type="PANTHER" id="PTHR13026:SF0">
    <property type="entry name" value="RIBOSOMAL RNA PROCESSING 1B"/>
    <property type="match status" value="1"/>
</dbReference>
<dbReference type="Pfam" id="PF05997">
    <property type="entry name" value="Nop52"/>
    <property type="match status" value="1"/>
</dbReference>
<gene>
    <name type="primary">rrp1</name>
    <name type="ORF">DDB_G0279321</name>
</gene>
<feature type="chain" id="PRO_0000340115" description="Ribosomal RNA processing protein 1 homolog">
    <location>
        <begin position="1"/>
        <end position="495"/>
    </location>
</feature>
<feature type="region of interest" description="Disordered" evidence="2">
    <location>
        <begin position="334"/>
        <end position="495"/>
    </location>
</feature>
<feature type="compositionally biased region" description="Acidic residues" evidence="2">
    <location>
        <begin position="346"/>
        <end position="412"/>
    </location>
</feature>
<feature type="compositionally biased region" description="Low complexity" evidence="2">
    <location>
        <begin position="427"/>
        <end position="452"/>
    </location>
</feature>
<feature type="compositionally biased region" description="Polar residues" evidence="2">
    <location>
        <begin position="453"/>
        <end position="478"/>
    </location>
</feature>
<name>RRP1_DICDI</name>
<comment type="function">
    <text evidence="1">May be involved in the generation of 28S rRNA.</text>
</comment>
<comment type="subcellular location">
    <subcellularLocation>
        <location evidence="3">Nucleus</location>
    </subcellularLocation>
</comment>
<comment type="similarity">
    <text evidence="3">Belongs to the RRP1 family.</text>
</comment>
<organism>
    <name type="scientific">Dictyostelium discoideum</name>
    <name type="common">Social amoeba</name>
    <dbReference type="NCBI Taxonomy" id="44689"/>
    <lineage>
        <taxon>Eukaryota</taxon>
        <taxon>Amoebozoa</taxon>
        <taxon>Evosea</taxon>
        <taxon>Eumycetozoa</taxon>
        <taxon>Dictyostelia</taxon>
        <taxon>Dictyosteliales</taxon>
        <taxon>Dictyosteliaceae</taxon>
        <taxon>Dictyostelium</taxon>
    </lineage>
</organism>